<protein>
    <recommendedName>
        <fullName evidence="1">ATP phosphoribosyltransferase</fullName>
        <shortName evidence="1">ATP-PRT</shortName>
        <shortName evidence="1">ATP-PRTase</shortName>
        <ecNumber evidence="1">2.4.2.17</ecNumber>
    </recommendedName>
</protein>
<comment type="function">
    <text evidence="1">Catalyzes the condensation of ATP and 5-phosphoribose 1-diphosphate to form N'-(5'-phosphoribosyl)-ATP (PR-ATP). Has a crucial role in the pathway because the rate of histidine biosynthesis seems to be controlled primarily by regulation of HisG enzymatic activity.</text>
</comment>
<comment type="catalytic activity">
    <reaction evidence="1">
        <text>1-(5-phospho-beta-D-ribosyl)-ATP + diphosphate = 5-phospho-alpha-D-ribose 1-diphosphate + ATP</text>
        <dbReference type="Rhea" id="RHEA:18473"/>
        <dbReference type="ChEBI" id="CHEBI:30616"/>
        <dbReference type="ChEBI" id="CHEBI:33019"/>
        <dbReference type="ChEBI" id="CHEBI:58017"/>
        <dbReference type="ChEBI" id="CHEBI:73183"/>
        <dbReference type="EC" id="2.4.2.17"/>
    </reaction>
</comment>
<comment type="cofactor">
    <cofactor evidence="1">
        <name>Mg(2+)</name>
        <dbReference type="ChEBI" id="CHEBI:18420"/>
    </cofactor>
</comment>
<comment type="activity regulation">
    <text evidence="1">Feedback inhibited by histidine.</text>
</comment>
<comment type="pathway">
    <text evidence="1">Amino-acid biosynthesis; L-histidine biosynthesis; L-histidine from 5-phospho-alpha-D-ribose 1-diphosphate: step 1/9.</text>
</comment>
<comment type="subunit">
    <text evidence="1">Equilibrium between an active dimeric form, an inactive hexameric form and higher aggregates. Interconversion between the various forms is largely reversible and is influenced by the natural substrates and inhibitors of the enzyme.</text>
</comment>
<comment type="subcellular location">
    <subcellularLocation>
        <location evidence="1">Cytoplasm</location>
    </subcellularLocation>
</comment>
<comment type="similarity">
    <text evidence="1">Belongs to the ATP phosphoribosyltransferase family. Long subfamily.</text>
</comment>
<name>HIS1_ECO24</name>
<proteinExistence type="inferred from homology"/>
<reference key="1">
    <citation type="journal article" date="2008" name="J. Bacteriol.">
        <title>The pangenome structure of Escherichia coli: comparative genomic analysis of E. coli commensal and pathogenic isolates.</title>
        <authorList>
            <person name="Rasko D.A."/>
            <person name="Rosovitz M.J."/>
            <person name="Myers G.S.A."/>
            <person name="Mongodin E.F."/>
            <person name="Fricke W.F."/>
            <person name="Gajer P."/>
            <person name="Crabtree J."/>
            <person name="Sebaihia M."/>
            <person name="Thomson N.R."/>
            <person name="Chaudhuri R."/>
            <person name="Henderson I.R."/>
            <person name="Sperandio V."/>
            <person name="Ravel J."/>
        </authorList>
    </citation>
    <scope>NUCLEOTIDE SEQUENCE [LARGE SCALE GENOMIC DNA]</scope>
    <source>
        <strain>E24377A / ETEC</strain>
    </source>
</reference>
<dbReference type="EC" id="2.4.2.17" evidence="1"/>
<dbReference type="EMBL" id="CP000800">
    <property type="protein sequence ID" value="ABV20384.1"/>
    <property type="molecule type" value="Genomic_DNA"/>
</dbReference>
<dbReference type="RefSeq" id="WP_000131782.1">
    <property type="nucleotide sequence ID" value="NC_009801.1"/>
</dbReference>
<dbReference type="SMR" id="A7ZNJ1"/>
<dbReference type="GeneID" id="93775154"/>
<dbReference type="KEGG" id="ecw:EcE24377A_2310"/>
<dbReference type="HOGENOM" id="CLU_038115_1_0_6"/>
<dbReference type="UniPathway" id="UPA00031">
    <property type="reaction ID" value="UER00006"/>
</dbReference>
<dbReference type="Proteomes" id="UP000001122">
    <property type="component" value="Chromosome"/>
</dbReference>
<dbReference type="GO" id="GO:0005737">
    <property type="term" value="C:cytoplasm"/>
    <property type="evidence" value="ECO:0007669"/>
    <property type="project" value="UniProtKB-SubCell"/>
</dbReference>
<dbReference type="GO" id="GO:0005524">
    <property type="term" value="F:ATP binding"/>
    <property type="evidence" value="ECO:0007669"/>
    <property type="project" value="UniProtKB-KW"/>
</dbReference>
<dbReference type="GO" id="GO:0003879">
    <property type="term" value="F:ATP phosphoribosyltransferase activity"/>
    <property type="evidence" value="ECO:0007669"/>
    <property type="project" value="UniProtKB-UniRule"/>
</dbReference>
<dbReference type="GO" id="GO:0000287">
    <property type="term" value="F:magnesium ion binding"/>
    <property type="evidence" value="ECO:0007669"/>
    <property type="project" value="UniProtKB-UniRule"/>
</dbReference>
<dbReference type="GO" id="GO:0000105">
    <property type="term" value="P:L-histidine biosynthetic process"/>
    <property type="evidence" value="ECO:0007669"/>
    <property type="project" value="UniProtKB-UniRule"/>
</dbReference>
<dbReference type="CDD" id="cd13592">
    <property type="entry name" value="PBP2_HisGL2"/>
    <property type="match status" value="1"/>
</dbReference>
<dbReference type="FunFam" id="3.30.70.120:FF:000002">
    <property type="entry name" value="ATP phosphoribosyltransferase"/>
    <property type="match status" value="1"/>
</dbReference>
<dbReference type="FunFam" id="3.40.190.10:FF:000008">
    <property type="entry name" value="ATP phosphoribosyltransferase"/>
    <property type="match status" value="1"/>
</dbReference>
<dbReference type="Gene3D" id="3.30.70.120">
    <property type="match status" value="1"/>
</dbReference>
<dbReference type="Gene3D" id="3.40.190.10">
    <property type="entry name" value="Periplasmic binding protein-like II"/>
    <property type="match status" value="2"/>
</dbReference>
<dbReference type="HAMAP" id="MF_00079">
    <property type="entry name" value="HisG_Long"/>
    <property type="match status" value="1"/>
</dbReference>
<dbReference type="InterPro" id="IPR020621">
    <property type="entry name" value="ATP-PRT_HisG_long"/>
</dbReference>
<dbReference type="InterPro" id="IPR013820">
    <property type="entry name" value="ATP_PRibTrfase_cat"/>
</dbReference>
<dbReference type="InterPro" id="IPR018198">
    <property type="entry name" value="ATP_PRibTrfase_CS"/>
</dbReference>
<dbReference type="InterPro" id="IPR001348">
    <property type="entry name" value="ATP_PRibTrfase_HisG"/>
</dbReference>
<dbReference type="InterPro" id="IPR013115">
    <property type="entry name" value="HisG_C"/>
</dbReference>
<dbReference type="InterPro" id="IPR011322">
    <property type="entry name" value="N-reg_PII-like_a/b"/>
</dbReference>
<dbReference type="InterPro" id="IPR015867">
    <property type="entry name" value="N-reg_PII/ATP_PRibTrfase_C"/>
</dbReference>
<dbReference type="NCBIfam" id="TIGR00070">
    <property type="entry name" value="hisG"/>
    <property type="match status" value="1"/>
</dbReference>
<dbReference type="NCBIfam" id="TIGR03455">
    <property type="entry name" value="HisG_C-term"/>
    <property type="match status" value="1"/>
</dbReference>
<dbReference type="PANTHER" id="PTHR21403:SF8">
    <property type="entry name" value="ATP PHOSPHORIBOSYLTRANSFERASE"/>
    <property type="match status" value="1"/>
</dbReference>
<dbReference type="PANTHER" id="PTHR21403">
    <property type="entry name" value="ATP PHOSPHORIBOSYLTRANSFERASE ATP-PRTASE"/>
    <property type="match status" value="1"/>
</dbReference>
<dbReference type="Pfam" id="PF01634">
    <property type="entry name" value="HisG"/>
    <property type="match status" value="1"/>
</dbReference>
<dbReference type="Pfam" id="PF08029">
    <property type="entry name" value="HisG_C"/>
    <property type="match status" value="1"/>
</dbReference>
<dbReference type="SUPFAM" id="SSF54913">
    <property type="entry name" value="GlnB-like"/>
    <property type="match status" value="1"/>
</dbReference>
<dbReference type="SUPFAM" id="SSF53850">
    <property type="entry name" value="Periplasmic binding protein-like II"/>
    <property type="match status" value="1"/>
</dbReference>
<dbReference type="PROSITE" id="PS01316">
    <property type="entry name" value="ATP_P_PHORIBOSYLTR"/>
    <property type="match status" value="1"/>
</dbReference>
<organism>
    <name type="scientific">Escherichia coli O139:H28 (strain E24377A / ETEC)</name>
    <dbReference type="NCBI Taxonomy" id="331111"/>
    <lineage>
        <taxon>Bacteria</taxon>
        <taxon>Pseudomonadati</taxon>
        <taxon>Pseudomonadota</taxon>
        <taxon>Gammaproteobacteria</taxon>
        <taxon>Enterobacterales</taxon>
        <taxon>Enterobacteriaceae</taxon>
        <taxon>Escherichia</taxon>
    </lineage>
</organism>
<feature type="chain" id="PRO_1000057523" description="ATP phosphoribosyltransferase">
    <location>
        <begin position="1"/>
        <end position="299"/>
    </location>
</feature>
<accession>A7ZNJ1</accession>
<sequence>MTDNTRLRIAMQKSGRLSDDSRELLARCGIKINLHTQRLIAMAENMPIDILRVRDDDIPGLVMDGVVDLGIIGENVLEEELLNRRAQGEDPRYFTLRRLDFGGCRLSLATPVDEAWDGPLSLNGKRIATSYPHLLKRYLDQKGISFKSCLLNGSVEVAPRAGLADAICDLVSTGATLEANGLREVEVIYRSKACLIQRDGEMEESKQQLIDKLLTRIQGVIQARESKYIMMHAPTERLDEVIALLPGAERPTILPLAGDQQRVAMHMVSSETLFWETMEKLKALGASSILVLPIEKMME</sequence>
<keyword id="KW-0028">Amino-acid biosynthesis</keyword>
<keyword id="KW-0067">ATP-binding</keyword>
<keyword id="KW-0963">Cytoplasm</keyword>
<keyword id="KW-0328">Glycosyltransferase</keyword>
<keyword id="KW-0368">Histidine biosynthesis</keyword>
<keyword id="KW-0460">Magnesium</keyword>
<keyword id="KW-0479">Metal-binding</keyword>
<keyword id="KW-0547">Nucleotide-binding</keyword>
<keyword id="KW-1185">Reference proteome</keyword>
<keyword id="KW-0808">Transferase</keyword>
<evidence type="ECO:0000255" key="1">
    <source>
        <dbReference type="HAMAP-Rule" id="MF_00079"/>
    </source>
</evidence>
<gene>
    <name evidence="1" type="primary">hisG</name>
    <name type="ordered locus">EcE24377A_2310</name>
</gene>